<protein>
    <recommendedName>
        <fullName evidence="2">EKC/KEOPS complex subunit Tprkb</fullName>
    </recommendedName>
    <alternativeName>
        <fullName evidence="1">PRPK-binding protein</fullName>
    </alternativeName>
    <alternativeName>
        <fullName evidence="1">TP53RK-binding protein</fullName>
    </alternativeName>
</protein>
<name>TPRKB_RAT</name>
<keyword id="KW-0963">Cytoplasm</keyword>
<keyword id="KW-0539">Nucleus</keyword>
<keyword id="KW-1185">Reference proteome</keyword>
<keyword id="KW-0819">tRNA processing</keyword>
<proteinExistence type="evidence at transcript level"/>
<organism>
    <name type="scientific">Rattus norvegicus</name>
    <name type="common">Rat</name>
    <dbReference type="NCBI Taxonomy" id="10116"/>
    <lineage>
        <taxon>Eukaryota</taxon>
        <taxon>Metazoa</taxon>
        <taxon>Chordata</taxon>
        <taxon>Craniata</taxon>
        <taxon>Vertebrata</taxon>
        <taxon>Euteleostomi</taxon>
        <taxon>Mammalia</taxon>
        <taxon>Eutheria</taxon>
        <taxon>Euarchontoglires</taxon>
        <taxon>Glires</taxon>
        <taxon>Rodentia</taxon>
        <taxon>Myomorpha</taxon>
        <taxon>Muroidea</taxon>
        <taxon>Muridae</taxon>
        <taxon>Murinae</taxon>
        <taxon>Rattus</taxon>
    </lineage>
</organism>
<comment type="function">
    <text evidence="1">Component of the EKC/KEOPS complex that is required for the formation of a threonylcarbamoyl group on adenosine at position 37 (t(6)A37) in tRNAs that read codons beginning with adenine. The complex is probably involved in the transfer of the threonylcarbamoyl moiety of threonylcarbamoyl-AMP (TC-AMP) to the N6 group of A37. TPRKB acts as an allosteric effector that regulates the t(6)A activity of the complex. TPRKB is not required for tRNA modification.</text>
</comment>
<comment type="subunit">
    <text evidence="1">Component of the EKC/KEOPS complex composed of at least GON7, TP53RK, TPRKB, OSGEP and LAGE3; the whole complex dimerizes. Interacts with TP53RK/PRPK.</text>
</comment>
<comment type="subcellular location">
    <subcellularLocation>
        <location evidence="1">Cytoplasm</location>
        <location evidence="1">Cytosol</location>
    </subcellularLocation>
    <subcellularLocation>
        <location evidence="1">Nucleus</location>
    </subcellularLocation>
</comment>
<comment type="similarity">
    <text evidence="2">Belongs to the CGI121/TPRKB family.</text>
</comment>
<sequence length="158" mass="17593">MQLTQQLDLFPECKVTLLLFKDVKNAGDLRKKAMEGSIDGSLINANVIVDPFQILVAANKAVHLHKLGKMKTRTLSTEIIFNLSPNNNISEALKKFGISESNTSVLIVYVEDGDKQVHQEHLVSQVEGQQVPLESLPEITRLSEVRKVCSTQPEEVSR</sequence>
<accession>Q5PQR8</accession>
<evidence type="ECO:0000250" key="1">
    <source>
        <dbReference type="UniProtKB" id="Q9Y3C4"/>
    </source>
</evidence>
<evidence type="ECO:0000305" key="2"/>
<evidence type="ECO:0000312" key="3">
    <source>
        <dbReference type="RGD" id="1309786"/>
    </source>
</evidence>
<gene>
    <name evidence="3" type="primary">Tprkb</name>
</gene>
<reference key="1">
    <citation type="journal article" date="2004" name="Genome Res.">
        <title>The status, quality, and expansion of the NIH full-length cDNA project: the Mammalian Gene Collection (MGC).</title>
        <authorList>
            <consortium name="The MGC Project Team"/>
        </authorList>
    </citation>
    <scope>NUCLEOTIDE SEQUENCE [LARGE SCALE MRNA]</scope>
    <source>
        <tissue>Lung</tissue>
    </source>
</reference>
<feature type="chain" id="PRO_0000279222" description="EKC/KEOPS complex subunit Tprkb">
    <location>
        <begin position="1"/>
        <end position="158"/>
    </location>
</feature>
<dbReference type="EMBL" id="BC087060">
    <property type="protein sequence ID" value="AAH87060.1"/>
    <property type="molecule type" value="mRNA"/>
</dbReference>
<dbReference type="SMR" id="Q5PQR8"/>
<dbReference type="FunCoup" id="Q5PQR8">
    <property type="interactions" value="1900"/>
</dbReference>
<dbReference type="STRING" id="10116.ENSRNOP00000021211"/>
<dbReference type="PhosphoSitePlus" id="Q5PQR8"/>
<dbReference type="PaxDb" id="10116-ENSRNOP00000021211"/>
<dbReference type="Ensembl" id="ENSRNOT00000078239.2">
    <property type="protein sequence ID" value="ENSRNOP00000074558.1"/>
    <property type="gene ID" value="ENSRNOG00000050645.3"/>
</dbReference>
<dbReference type="UCSC" id="RGD:1309786">
    <property type="organism name" value="rat"/>
</dbReference>
<dbReference type="AGR" id="RGD:1309786"/>
<dbReference type="RGD" id="1309786">
    <property type="gene designation" value="Tprkb"/>
</dbReference>
<dbReference type="eggNOG" id="KOG4066">
    <property type="taxonomic scope" value="Eukaryota"/>
</dbReference>
<dbReference type="GeneTree" id="ENSGT00390000012942"/>
<dbReference type="InParanoid" id="Q5PQR8"/>
<dbReference type="PhylomeDB" id="Q5PQR8"/>
<dbReference type="PRO" id="PR:Q5PQR8"/>
<dbReference type="Proteomes" id="UP000002494">
    <property type="component" value="Chromosome 4"/>
</dbReference>
<dbReference type="Bgee" id="ENSRNOG00000050645">
    <property type="expression patterns" value="Expressed in kidney and 19 other cell types or tissues"/>
</dbReference>
<dbReference type="ExpressionAtlas" id="Q5PQR8">
    <property type="expression patterns" value="baseline and differential"/>
</dbReference>
<dbReference type="GO" id="GO:0005737">
    <property type="term" value="C:cytoplasm"/>
    <property type="evidence" value="ECO:0000250"/>
    <property type="project" value="UniProtKB"/>
</dbReference>
<dbReference type="GO" id="GO:0005829">
    <property type="term" value="C:cytosol"/>
    <property type="evidence" value="ECO:0000266"/>
    <property type="project" value="RGD"/>
</dbReference>
<dbReference type="GO" id="GO:0000408">
    <property type="term" value="C:EKC/KEOPS complex"/>
    <property type="evidence" value="ECO:0000250"/>
    <property type="project" value="UniProtKB"/>
</dbReference>
<dbReference type="GO" id="GO:0005634">
    <property type="term" value="C:nucleus"/>
    <property type="evidence" value="ECO:0000250"/>
    <property type="project" value="UniProtKB"/>
</dbReference>
<dbReference type="GO" id="GO:0019901">
    <property type="term" value="F:protein kinase binding"/>
    <property type="evidence" value="ECO:0000266"/>
    <property type="project" value="RGD"/>
</dbReference>
<dbReference type="GO" id="GO:0002949">
    <property type="term" value="P:tRNA threonylcarbamoyladenosine modification"/>
    <property type="evidence" value="ECO:0000250"/>
    <property type="project" value="UniProtKB"/>
</dbReference>
<dbReference type="FunFam" id="3.30.2380.10:FF:000001">
    <property type="entry name" value="EKC/KEOPS complex subunit TPRKB"/>
    <property type="match status" value="1"/>
</dbReference>
<dbReference type="Gene3D" id="3.30.2380.10">
    <property type="entry name" value="CGI121/TPRKB"/>
    <property type="match status" value="1"/>
</dbReference>
<dbReference type="InterPro" id="IPR013926">
    <property type="entry name" value="CGI121/TPRKB"/>
</dbReference>
<dbReference type="InterPro" id="IPR036504">
    <property type="entry name" value="CGI121/TPRKB_sf"/>
</dbReference>
<dbReference type="PANTHER" id="PTHR15840">
    <property type="entry name" value="CGI-121 FAMILY MEMBER"/>
    <property type="match status" value="1"/>
</dbReference>
<dbReference type="PANTHER" id="PTHR15840:SF10">
    <property type="entry name" value="EKC_KEOPS COMPLEX SUBUNIT TPRKB"/>
    <property type="match status" value="1"/>
</dbReference>
<dbReference type="Pfam" id="PF08617">
    <property type="entry name" value="CGI-121"/>
    <property type="match status" value="1"/>
</dbReference>
<dbReference type="SUPFAM" id="SSF143870">
    <property type="entry name" value="PF0523-like"/>
    <property type="match status" value="1"/>
</dbReference>